<gene>
    <name evidence="4" type="primary">atp5po</name>
    <name type="synonym">atp5O</name>
    <name type="ORF">DDB_G0283283</name>
</gene>
<proteinExistence type="inferred from homology"/>
<sequence length="296" mass="33130">MLARFSRTAIKSGRYFSTSAKNTAPVSEAEEIEILKAVEAPQFKDAVKKTRQQYQDMISKLTNDESGKSITQSTGLRPTINISTPSGKIAHALFDAASSMRSVGIVAKELTQVKTIIDKTPGLKTALEGDIDNSEKTVMLELLQGSVTLSPVSGFFLYYMTYENNFKLINPALTDFKRLVGSLDTEMSIKLTVAHQYSEAEKKDLETNVKSFFPPETQFKFSYNVDPEIQKGYIIESPFINHDASYSTAVKKVKAQEQSVLAEFLNDIKNGIKNQTAVWETKEFRDKYLTLDESKN</sequence>
<evidence type="ECO:0000250" key="1"/>
<evidence type="ECO:0000250" key="2">
    <source>
        <dbReference type="UniProtKB" id="P13621"/>
    </source>
</evidence>
<evidence type="ECO:0000250" key="3">
    <source>
        <dbReference type="UniProtKB" id="P19483"/>
    </source>
</evidence>
<evidence type="ECO:0000250" key="4">
    <source>
        <dbReference type="UniProtKB" id="P48047"/>
    </source>
</evidence>
<evidence type="ECO:0000255" key="5"/>
<evidence type="ECO:0000305" key="6"/>
<dbReference type="EMBL" id="AAFI02000052">
    <property type="protein sequence ID" value="EAL65782.1"/>
    <property type="molecule type" value="Genomic_DNA"/>
</dbReference>
<dbReference type="RefSeq" id="XP_639139.1">
    <property type="nucleotide sequence ID" value="XM_634047.1"/>
</dbReference>
<dbReference type="SMR" id="Q54RA8"/>
<dbReference type="FunCoup" id="Q54RA8">
    <property type="interactions" value="126"/>
</dbReference>
<dbReference type="STRING" id="44689.Q54RA8"/>
<dbReference type="PaxDb" id="44689-DDB0266798"/>
<dbReference type="EnsemblProtists" id="EAL65782">
    <property type="protein sequence ID" value="EAL65782"/>
    <property type="gene ID" value="DDB_G0283283"/>
</dbReference>
<dbReference type="GeneID" id="8624009"/>
<dbReference type="KEGG" id="ddi:DDB_G0283283"/>
<dbReference type="dictyBase" id="DDB_G0283283">
    <property type="gene designation" value="atp5O"/>
</dbReference>
<dbReference type="VEuPathDB" id="AmoebaDB:DDB_G0283283"/>
<dbReference type="eggNOG" id="ENOG502RBP1">
    <property type="taxonomic scope" value="Eukaryota"/>
</dbReference>
<dbReference type="HOGENOM" id="CLU_941430_0_0_1"/>
<dbReference type="InParanoid" id="Q54RA8"/>
<dbReference type="OMA" id="HEYNDKE"/>
<dbReference type="PhylomeDB" id="Q54RA8"/>
<dbReference type="Reactome" id="R-DDI-9837999">
    <property type="pathway name" value="Mitochondrial protein degradation"/>
</dbReference>
<dbReference type="PRO" id="PR:Q54RA8"/>
<dbReference type="Proteomes" id="UP000002195">
    <property type="component" value="Chromosome 4"/>
</dbReference>
<dbReference type="GO" id="GO:0005743">
    <property type="term" value="C:mitochondrial inner membrane"/>
    <property type="evidence" value="ECO:0007669"/>
    <property type="project" value="UniProtKB-SubCell"/>
</dbReference>
<dbReference type="GO" id="GO:0045335">
    <property type="term" value="C:phagocytic vesicle"/>
    <property type="evidence" value="ECO:0007005"/>
    <property type="project" value="dictyBase"/>
</dbReference>
<dbReference type="GO" id="GO:0046933">
    <property type="term" value="F:proton-transporting ATP synthase activity, rotational mechanism"/>
    <property type="evidence" value="ECO:0007669"/>
    <property type="project" value="InterPro"/>
</dbReference>
<dbReference type="GO" id="GO:0042776">
    <property type="term" value="P:proton motive force-driven mitochondrial ATP synthesis"/>
    <property type="evidence" value="ECO:0000318"/>
    <property type="project" value="GO_Central"/>
</dbReference>
<dbReference type="InterPro" id="IPR026015">
    <property type="entry name" value="ATP_synth_OSCP/delta_N_sf"/>
</dbReference>
<dbReference type="InterPro" id="IPR000711">
    <property type="entry name" value="ATPase_OSCP/dsu"/>
</dbReference>
<dbReference type="PANTHER" id="PTHR11910">
    <property type="entry name" value="ATP SYNTHASE DELTA CHAIN"/>
    <property type="match status" value="1"/>
</dbReference>
<dbReference type="Pfam" id="PF00213">
    <property type="entry name" value="OSCP"/>
    <property type="match status" value="1"/>
</dbReference>
<dbReference type="SUPFAM" id="SSF47928">
    <property type="entry name" value="N-terminal domain of the delta subunit of the F1F0-ATP synthase"/>
    <property type="match status" value="1"/>
</dbReference>
<accession>Q54RA8</accession>
<reference key="1">
    <citation type="journal article" date="2005" name="Nature">
        <title>The genome of the social amoeba Dictyostelium discoideum.</title>
        <authorList>
            <person name="Eichinger L."/>
            <person name="Pachebat J.A."/>
            <person name="Gloeckner G."/>
            <person name="Rajandream M.A."/>
            <person name="Sucgang R."/>
            <person name="Berriman M."/>
            <person name="Song J."/>
            <person name="Olsen R."/>
            <person name="Szafranski K."/>
            <person name="Xu Q."/>
            <person name="Tunggal B."/>
            <person name="Kummerfeld S."/>
            <person name="Madera M."/>
            <person name="Konfortov B.A."/>
            <person name="Rivero F."/>
            <person name="Bankier A.T."/>
            <person name="Lehmann R."/>
            <person name="Hamlin N."/>
            <person name="Davies R."/>
            <person name="Gaudet P."/>
            <person name="Fey P."/>
            <person name="Pilcher K."/>
            <person name="Chen G."/>
            <person name="Saunders D."/>
            <person name="Sodergren E.J."/>
            <person name="Davis P."/>
            <person name="Kerhornou A."/>
            <person name="Nie X."/>
            <person name="Hall N."/>
            <person name="Anjard C."/>
            <person name="Hemphill L."/>
            <person name="Bason N."/>
            <person name="Farbrother P."/>
            <person name="Desany B."/>
            <person name="Just E."/>
            <person name="Morio T."/>
            <person name="Rost R."/>
            <person name="Churcher C.M."/>
            <person name="Cooper J."/>
            <person name="Haydock S."/>
            <person name="van Driessche N."/>
            <person name="Cronin A."/>
            <person name="Goodhead I."/>
            <person name="Muzny D.M."/>
            <person name="Mourier T."/>
            <person name="Pain A."/>
            <person name="Lu M."/>
            <person name="Harper D."/>
            <person name="Lindsay R."/>
            <person name="Hauser H."/>
            <person name="James K.D."/>
            <person name="Quiles M."/>
            <person name="Madan Babu M."/>
            <person name="Saito T."/>
            <person name="Buchrieser C."/>
            <person name="Wardroper A."/>
            <person name="Felder M."/>
            <person name="Thangavelu M."/>
            <person name="Johnson D."/>
            <person name="Knights A."/>
            <person name="Loulseged H."/>
            <person name="Mungall K.L."/>
            <person name="Oliver K."/>
            <person name="Price C."/>
            <person name="Quail M.A."/>
            <person name="Urushihara H."/>
            <person name="Hernandez J."/>
            <person name="Rabbinowitsch E."/>
            <person name="Steffen D."/>
            <person name="Sanders M."/>
            <person name="Ma J."/>
            <person name="Kohara Y."/>
            <person name="Sharp S."/>
            <person name="Simmonds M.N."/>
            <person name="Spiegler S."/>
            <person name="Tivey A."/>
            <person name="Sugano S."/>
            <person name="White B."/>
            <person name="Walker D."/>
            <person name="Woodward J.R."/>
            <person name="Winckler T."/>
            <person name="Tanaka Y."/>
            <person name="Shaulsky G."/>
            <person name="Schleicher M."/>
            <person name="Weinstock G.M."/>
            <person name="Rosenthal A."/>
            <person name="Cox E.C."/>
            <person name="Chisholm R.L."/>
            <person name="Gibbs R.A."/>
            <person name="Loomis W.F."/>
            <person name="Platzer M."/>
            <person name="Kay R.R."/>
            <person name="Williams J.G."/>
            <person name="Dear P.H."/>
            <person name="Noegel A.A."/>
            <person name="Barrell B.G."/>
            <person name="Kuspa A."/>
        </authorList>
    </citation>
    <scope>NUCLEOTIDE SEQUENCE [LARGE SCALE GENOMIC DNA]</scope>
    <source>
        <strain>AX4</strain>
    </source>
</reference>
<protein>
    <recommendedName>
        <fullName evidence="4">ATP synthase peripheral stalk subunit OSCP, mitochondrial</fullName>
    </recommendedName>
    <alternativeName>
        <fullName evidence="6">ATP synthase subunit O</fullName>
    </alternativeName>
    <alternativeName>
        <fullName>Oligomycin sensitivity conferral protein</fullName>
        <shortName>OSCP</shortName>
    </alternativeName>
</protein>
<keyword id="KW-0066">ATP synthesis</keyword>
<keyword id="KW-0375">Hydrogen ion transport</keyword>
<keyword id="KW-0406">Ion transport</keyword>
<keyword id="KW-0472">Membrane</keyword>
<keyword id="KW-0496">Mitochondrion</keyword>
<keyword id="KW-0999">Mitochondrion inner membrane</keyword>
<keyword id="KW-1185">Reference proteome</keyword>
<keyword id="KW-0809">Transit peptide</keyword>
<keyword id="KW-0813">Transport</keyword>
<comment type="function">
    <text evidence="2 3 4">Subunit OSCP, of the mitochondrial membrane ATP synthase complex (F(1)F(0) ATP synthase or Complex V) that produces ATP from ADP in the presence of a proton gradient across the membrane which is generated by electron transport complexes of the respiratory chain. ATP synthase complex consist of a soluble F(1) head domain - the catalytic core - and a membrane F(1) domain - the membrane proton channel. These two domains are linked by a central stalk rotating inside the F(1) region and a stationary peripheral stalk. During catalysis, ATP synthesis in the catalytic domain of F(1) is coupled via a rotary mechanism of the central stalk subunits to proton translocation (By similarity). In vivo, can only synthesize ATP although its ATP hydrolase activity can be activated artificially in vitro (By similarity). Part of the complex F(0) domain (By similarity). Part of the complex F(0) domain and the peripheric stalk, which acts as a stator to hold the catalytic alpha(3)beta(3) subcomplex and subunit a/ATP6 static relative to the rotary elements (By similarity).</text>
</comment>
<comment type="subunit">
    <text evidence="4">Component of the ATP synthase complex composed at least of ATP5F1A/subunit alpha, ATP5F1B/subunit beta, ATP5MC1/subunit c (homooctomer), MT-ATP6/subunit a, MT-ATP8/subunit 8, ATP5ME/subunit e, ATP5MF/subunit f, ATP5MG/subunit g, ATP5MK/subunit k, ATP5MJ/subunit j, ATP5F1C/subunit gamma, ATP5F1D/subunit delta, ATP5F1E/subunit epsilon, ATP5PF/subunit F6, ATP5PB/subunit b, ATP5PD/subunit d, ATP5PO/subunit OSCP. ATP synthase complex consists of a soluble F(1) head domain (subunits alpha(3) and beta(3)) - the catalytic core - and a membrane F(0) domain - the membrane proton channel (subunits c, a, 8, e, f, g, k and j). These two domains are linked by a central stalk (subunits gamma, delta, and epsilon) rotating inside the F1 region and a stationary peripheral stalk (subunits F6, b, d, and OSCP).</text>
</comment>
<comment type="subcellular location">
    <subcellularLocation>
        <location>Mitochondrion</location>
    </subcellularLocation>
    <subcellularLocation>
        <location evidence="1">Mitochondrion inner membrane</location>
    </subcellularLocation>
</comment>
<comment type="similarity">
    <text evidence="6">Belongs to the ATPase delta chain family.</text>
</comment>
<organism>
    <name type="scientific">Dictyostelium discoideum</name>
    <name type="common">Social amoeba</name>
    <dbReference type="NCBI Taxonomy" id="44689"/>
    <lineage>
        <taxon>Eukaryota</taxon>
        <taxon>Amoebozoa</taxon>
        <taxon>Evosea</taxon>
        <taxon>Eumycetozoa</taxon>
        <taxon>Dictyostelia</taxon>
        <taxon>Dictyosteliales</taxon>
        <taxon>Dictyosteliaceae</taxon>
        <taxon>Dictyostelium</taxon>
    </lineage>
</organism>
<name>ATPO_DICDI</name>
<feature type="transit peptide" description="Mitochondrion" evidence="5">
    <location>
        <begin position="1"/>
        <end status="unknown"/>
    </location>
</feature>
<feature type="chain" id="PRO_0000350580" description="ATP synthase peripheral stalk subunit OSCP, mitochondrial">
    <location>
        <begin status="unknown"/>
        <end position="296"/>
    </location>
</feature>